<feature type="chain" id="PRO_0000237318" description="DNA-directed RNA polymerase subunit beta">
    <location>
        <begin position="1"/>
        <end position="1139"/>
    </location>
</feature>
<feature type="region of interest" description="Disordered" evidence="2">
    <location>
        <begin position="1085"/>
        <end position="1139"/>
    </location>
</feature>
<feature type="compositionally biased region" description="Polar residues" evidence="2">
    <location>
        <begin position="1086"/>
        <end position="1106"/>
    </location>
</feature>
<feature type="compositionally biased region" description="Acidic residues" evidence="2">
    <location>
        <begin position="1128"/>
        <end position="1139"/>
    </location>
</feature>
<dbReference type="EC" id="2.7.7.6" evidence="1"/>
<dbReference type="EMBL" id="CP000240">
    <property type="protein sequence ID" value="ABD03370.1"/>
    <property type="molecule type" value="Genomic_DNA"/>
</dbReference>
<dbReference type="RefSeq" id="WP_011433999.1">
    <property type="nucleotide sequence ID" value="NC_007776.1"/>
</dbReference>
<dbReference type="SMR" id="Q2JJ19"/>
<dbReference type="STRING" id="321332.CYB_2436"/>
<dbReference type="KEGG" id="cyb:CYB_2436"/>
<dbReference type="eggNOG" id="COG0085">
    <property type="taxonomic scope" value="Bacteria"/>
</dbReference>
<dbReference type="HOGENOM" id="CLU_000524_4_1_3"/>
<dbReference type="OrthoDB" id="9803954at2"/>
<dbReference type="Proteomes" id="UP000001938">
    <property type="component" value="Chromosome"/>
</dbReference>
<dbReference type="GO" id="GO:0000428">
    <property type="term" value="C:DNA-directed RNA polymerase complex"/>
    <property type="evidence" value="ECO:0007669"/>
    <property type="project" value="UniProtKB-KW"/>
</dbReference>
<dbReference type="GO" id="GO:0003677">
    <property type="term" value="F:DNA binding"/>
    <property type="evidence" value="ECO:0007669"/>
    <property type="project" value="UniProtKB-UniRule"/>
</dbReference>
<dbReference type="GO" id="GO:0003899">
    <property type="term" value="F:DNA-directed RNA polymerase activity"/>
    <property type="evidence" value="ECO:0007669"/>
    <property type="project" value="UniProtKB-UniRule"/>
</dbReference>
<dbReference type="GO" id="GO:0032549">
    <property type="term" value="F:ribonucleoside binding"/>
    <property type="evidence" value="ECO:0007669"/>
    <property type="project" value="InterPro"/>
</dbReference>
<dbReference type="GO" id="GO:0006351">
    <property type="term" value="P:DNA-templated transcription"/>
    <property type="evidence" value="ECO:0007669"/>
    <property type="project" value="UniProtKB-UniRule"/>
</dbReference>
<dbReference type="CDD" id="cd00653">
    <property type="entry name" value="RNA_pol_B_RPB2"/>
    <property type="match status" value="1"/>
</dbReference>
<dbReference type="FunFam" id="3.90.1800.10:FF:000001">
    <property type="entry name" value="DNA-directed RNA polymerase subunit beta"/>
    <property type="match status" value="1"/>
</dbReference>
<dbReference type="Gene3D" id="2.40.50.100">
    <property type="match status" value="1"/>
</dbReference>
<dbReference type="Gene3D" id="2.40.50.150">
    <property type="match status" value="1"/>
</dbReference>
<dbReference type="Gene3D" id="3.90.1100.10">
    <property type="match status" value="1"/>
</dbReference>
<dbReference type="Gene3D" id="2.30.150.10">
    <property type="entry name" value="DNA-directed RNA polymerase, beta subunit, external 1 domain"/>
    <property type="match status" value="1"/>
</dbReference>
<dbReference type="Gene3D" id="2.40.270.10">
    <property type="entry name" value="DNA-directed RNA polymerase, subunit 2, domain 6"/>
    <property type="match status" value="1"/>
</dbReference>
<dbReference type="Gene3D" id="3.90.1800.10">
    <property type="entry name" value="RNA polymerase alpha subunit dimerisation domain"/>
    <property type="match status" value="1"/>
</dbReference>
<dbReference type="Gene3D" id="3.90.1110.10">
    <property type="entry name" value="RNA polymerase Rpb2, domain 2"/>
    <property type="match status" value="1"/>
</dbReference>
<dbReference type="HAMAP" id="MF_01321">
    <property type="entry name" value="RNApol_bact_RpoB"/>
    <property type="match status" value="1"/>
</dbReference>
<dbReference type="InterPro" id="IPR042107">
    <property type="entry name" value="DNA-dir_RNA_pol_bsu_ext_1_sf"/>
</dbReference>
<dbReference type="InterPro" id="IPR019462">
    <property type="entry name" value="DNA-dir_RNA_pol_bsu_external_1"/>
</dbReference>
<dbReference type="InterPro" id="IPR015712">
    <property type="entry name" value="DNA-dir_RNA_pol_su2"/>
</dbReference>
<dbReference type="InterPro" id="IPR007120">
    <property type="entry name" value="DNA-dir_RNAP_su2_dom"/>
</dbReference>
<dbReference type="InterPro" id="IPR037033">
    <property type="entry name" value="DNA-dir_RNAP_su2_hyb_sf"/>
</dbReference>
<dbReference type="InterPro" id="IPR010243">
    <property type="entry name" value="RNA_pol_bsu_bac"/>
</dbReference>
<dbReference type="InterPro" id="IPR007121">
    <property type="entry name" value="RNA_pol_bsu_CS"/>
</dbReference>
<dbReference type="InterPro" id="IPR007644">
    <property type="entry name" value="RNA_pol_bsu_protrusion"/>
</dbReference>
<dbReference type="InterPro" id="IPR007642">
    <property type="entry name" value="RNA_pol_Rpb2_2"/>
</dbReference>
<dbReference type="InterPro" id="IPR037034">
    <property type="entry name" value="RNA_pol_Rpb2_2_sf"/>
</dbReference>
<dbReference type="InterPro" id="IPR007645">
    <property type="entry name" value="RNA_pol_Rpb2_3"/>
</dbReference>
<dbReference type="InterPro" id="IPR007641">
    <property type="entry name" value="RNA_pol_Rpb2_7"/>
</dbReference>
<dbReference type="InterPro" id="IPR014724">
    <property type="entry name" value="RNA_pol_RPB2_OB-fold"/>
</dbReference>
<dbReference type="NCBIfam" id="NF001616">
    <property type="entry name" value="PRK00405.1"/>
    <property type="match status" value="1"/>
</dbReference>
<dbReference type="NCBIfam" id="TIGR02013">
    <property type="entry name" value="rpoB"/>
    <property type="match status" value="1"/>
</dbReference>
<dbReference type="PANTHER" id="PTHR20856">
    <property type="entry name" value="DNA-DIRECTED RNA POLYMERASE I SUBUNIT 2"/>
    <property type="match status" value="1"/>
</dbReference>
<dbReference type="Pfam" id="PF04563">
    <property type="entry name" value="RNA_pol_Rpb2_1"/>
    <property type="match status" value="1"/>
</dbReference>
<dbReference type="Pfam" id="PF04561">
    <property type="entry name" value="RNA_pol_Rpb2_2"/>
    <property type="match status" value="1"/>
</dbReference>
<dbReference type="Pfam" id="PF04565">
    <property type="entry name" value="RNA_pol_Rpb2_3"/>
    <property type="match status" value="1"/>
</dbReference>
<dbReference type="Pfam" id="PF10385">
    <property type="entry name" value="RNA_pol_Rpb2_45"/>
    <property type="match status" value="1"/>
</dbReference>
<dbReference type="Pfam" id="PF00562">
    <property type="entry name" value="RNA_pol_Rpb2_6"/>
    <property type="match status" value="1"/>
</dbReference>
<dbReference type="Pfam" id="PF04560">
    <property type="entry name" value="RNA_pol_Rpb2_7"/>
    <property type="match status" value="1"/>
</dbReference>
<dbReference type="SUPFAM" id="SSF64484">
    <property type="entry name" value="beta and beta-prime subunits of DNA dependent RNA-polymerase"/>
    <property type="match status" value="1"/>
</dbReference>
<dbReference type="PROSITE" id="PS01166">
    <property type="entry name" value="RNA_POL_BETA"/>
    <property type="match status" value="1"/>
</dbReference>
<reference key="1">
    <citation type="journal article" date="2007" name="ISME J.">
        <title>Population level functional diversity in a microbial community revealed by comparative genomic and metagenomic analyses.</title>
        <authorList>
            <person name="Bhaya D."/>
            <person name="Grossman A.R."/>
            <person name="Steunou A.-S."/>
            <person name="Khuri N."/>
            <person name="Cohan F.M."/>
            <person name="Hamamura N."/>
            <person name="Melendrez M.C."/>
            <person name="Bateson M.M."/>
            <person name="Ward D.M."/>
            <person name="Heidelberg J.F."/>
        </authorList>
    </citation>
    <scope>NUCLEOTIDE SEQUENCE [LARGE SCALE GENOMIC DNA]</scope>
    <source>
        <strain>JA-2-3B'a(2-13)</strain>
    </source>
</reference>
<organism>
    <name type="scientific">Synechococcus sp. (strain JA-2-3B'a(2-13))</name>
    <name type="common">Cyanobacteria bacterium Yellowstone B-Prime</name>
    <dbReference type="NCBI Taxonomy" id="321332"/>
    <lineage>
        <taxon>Bacteria</taxon>
        <taxon>Bacillati</taxon>
        <taxon>Cyanobacteriota</taxon>
        <taxon>Cyanophyceae</taxon>
        <taxon>Synechococcales</taxon>
        <taxon>Synechococcaceae</taxon>
        <taxon>Synechococcus</taxon>
    </lineage>
</organism>
<sequence>MTQLAVPSPVAPTFPDLVEIQRESFLWFLREGFEEELLSFSPIIDYTGKLELHFLPEYRPGDPSKGYKINRPRYDPEEAKRRDATYQAQIRVPTRLINKETGEIKDMDVFIGELPLMTDRGTFIINGAERVIVNQIVRSPGVYYKSELDKNGRRTYSASLIPNRGAWLKFETDKNGLVWVRIDKTRKLSAAVLLKALGLSDSEIYDNLRHPEFFQKTMEKEGPYTEEEALMELYRKLRPGEPPTVSGGQQLLESRFFDPKRYDLGRVGRYKLNKKLNLNVAESVRVLTVTDILAVIDYLINLEYDIGHVDDIDHLGNRRVRSVGELLQNQVRVGLNRLERIIRERMTVSESENLTPASLVNPKPLVAAIKEFFGSSQLSQFMDQTNPLAELTHKRRLSALGPGGLSRERAGFAVRDIHPSHYGRICPIETPEGPNAGLIGSLATHARVNQYGFIESPYYRVENGVVRKDLGMVYLTADEEDEYRVAPGDVPVDAEGRITADLVPVRYRQEFTTAHPTEVHYVQVAPVQVISVATSLIPFLEHDDANRALMGANMQRQAVPLLKPDRPYVGTGLEAQAARDSGMVVVSRTNGVVTYVSADEIVVRPDDGGDPIVYRLQKYQRSNQDTCLNQRPLVYTGDRVVAGQVLADGPATEGGELALGQNVLVAYMPWEGYNYEDAILISERLVYDDVFTSVHIEKHEIEARQTKLGPEEITREIPNVGEDALRDLDENGIVRIGAWVEAGDILVGKVTPKGESDQPPEERLLRAIFGEKARDVRDNSLRVPNGERGRVVDVRIFTREQGDELPPGANMVVRVYIALKRKIQVGDKIAGRHGNKGIISRILPIEDMPYLADGTPVDVVLNPLGVPSRMNVGQVYECLLGWAAEHLGVRFKLMPFDEMHGLEASRLTVEAKLREAREKTGKDWIFNPEGKYCGKIQVFDGRTGEPFDQPVTVGRAYMLKLVHLVDDKIHARSTGPYSLVTQQPLGGKAQQGGQRFGEMEVWALEAFGAAYILQELLTVKSDDMVGRNEALNAIVKGKPIPRPGTPESFKVLVRELQSLCLDVSVHKVEVDSEGQTHDVEVDLMADTSNRHTPSRPTYESVTSEDLSPSPAFTRVLRTADANASRSLEEDEDEEEEEDF</sequence>
<gene>
    <name evidence="1" type="primary">rpoB</name>
    <name type="ordered locus">CYB_2436</name>
</gene>
<keyword id="KW-0240">DNA-directed RNA polymerase</keyword>
<keyword id="KW-0548">Nucleotidyltransferase</keyword>
<keyword id="KW-1185">Reference proteome</keyword>
<keyword id="KW-0804">Transcription</keyword>
<keyword id="KW-0808">Transferase</keyword>
<accession>Q2JJ19</accession>
<proteinExistence type="inferred from homology"/>
<name>RPOB_SYNJB</name>
<protein>
    <recommendedName>
        <fullName evidence="1">DNA-directed RNA polymerase subunit beta</fullName>
        <shortName evidence="1">RNAP subunit beta</shortName>
        <ecNumber evidence="1">2.7.7.6</ecNumber>
    </recommendedName>
    <alternativeName>
        <fullName evidence="1">RNA polymerase subunit beta</fullName>
    </alternativeName>
    <alternativeName>
        <fullName evidence="1">Transcriptase subunit beta</fullName>
    </alternativeName>
</protein>
<comment type="function">
    <text evidence="1">DNA-dependent RNA polymerase catalyzes the transcription of DNA into RNA using the four ribonucleoside triphosphates as substrates.</text>
</comment>
<comment type="catalytic activity">
    <reaction evidence="1">
        <text>RNA(n) + a ribonucleoside 5'-triphosphate = RNA(n+1) + diphosphate</text>
        <dbReference type="Rhea" id="RHEA:21248"/>
        <dbReference type="Rhea" id="RHEA-COMP:14527"/>
        <dbReference type="Rhea" id="RHEA-COMP:17342"/>
        <dbReference type="ChEBI" id="CHEBI:33019"/>
        <dbReference type="ChEBI" id="CHEBI:61557"/>
        <dbReference type="ChEBI" id="CHEBI:140395"/>
        <dbReference type="EC" id="2.7.7.6"/>
    </reaction>
</comment>
<comment type="subunit">
    <text evidence="1">In cyanobacteria the RNAP catalytic core is composed of 2 alpha, 1 beta, 1 beta', 1 gamma and 1 omega subunit. When a sigma factor is associated with the core the holoenzyme is formed, which can initiate transcription.</text>
</comment>
<comment type="similarity">
    <text evidence="1">Belongs to the RNA polymerase beta chain family.</text>
</comment>
<evidence type="ECO:0000255" key="1">
    <source>
        <dbReference type="HAMAP-Rule" id="MF_01321"/>
    </source>
</evidence>
<evidence type="ECO:0000256" key="2">
    <source>
        <dbReference type="SAM" id="MobiDB-lite"/>
    </source>
</evidence>